<accession>O48534</accession>
<accession>Q93YW2</accession>
<dbReference type="EC" id="3.6.4.13" evidence="6"/>
<dbReference type="EMBL" id="AC002561">
    <property type="protein sequence ID" value="AAB88651.1"/>
    <property type="molecule type" value="Genomic_DNA"/>
</dbReference>
<dbReference type="EMBL" id="CP002685">
    <property type="protein sequence ID" value="AEC10098.1"/>
    <property type="molecule type" value="Genomic_DNA"/>
</dbReference>
<dbReference type="EMBL" id="AY059740">
    <property type="protein sequence ID" value="AAL24152.2"/>
    <property type="molecule type" value="mRNA"/>
</dbReference>
<dbReference type="PIR" id="T00936">
    <property type="entry name" value="T00936"/>
</dbReference>
<dbReference type="RefSeq" id="NP_181756.1">
    <property type="nucleotide sequence ID" value="NM_129789.2"/>
</dbReference>
<dbReference type="SMR" id="O48534"/>
<dbReference type="FunCoup" id="O48534">
    <property type="interactions" value="4103"/>
</dbReference>
<dbReference type="IntAct" id="O48534">
    <property type="interactions" value="1"/>
</dbReference>
<dbReference type="MINT" id="O48534"/>
<dbReference type="STRING" id="3702.O48534"/>
<dbReference type="iPTMnet" id="O48534"/>
<dbReference type="PaxDb" id="3702-AT2G42270.1"/>
<dbReference type="ProteomicsDB" id="224252"/>
<dbReference type="EnsemblPlants" id="AT2G42270.1">
    <property type="protein sequence ID" value="AT2G42270.1"/>
    <property type="gene ID" value="AT2G42270"/>
</dbReference>
<dbReference type="GeneID" id="818828"/>
<dbReference type="Gramene" id="AT2G42270.1">
    <property type="protein sequence ID" value="AT2G42270.1"/>
    <property type="gene ID" value="AT2G42270"/>
</dbReference>
<dbReference type="KEGG" id="ath:AT2G42270"/>
<dbReference type="Araport" id="AT2G42270"/>
<dbReference type="TAIR" id="AT2G42270">
    <property type="gene designation" value="BRR2B"/>
</dbReference>
<dbReference type="eggNOG" id="KOG0951">
    <property type="taxonomic scope" value="Eukaryota"/>
</dbReference>
<dbReference type="HOGENOM" id="CLU_000335_1_0_1"/>
<dbReference type="InParanoid" id="O48534"/>
<dbReference type="OMA" id="ITQHAKH"/>
<dbReference type="PhylomeDB" id="O48534"/>
<dbReference type="PRO" id="PR:O48534"/>
<dbReference type="Proteomes" id="UP000006548">
    <property type="component" value="Chromosome 2"/>
</dbReference>
<dbReference type="ExpressionAtlas" id="O48534">
    <property type="expression patterns" value="baseline and differential"/>
</dbReference>
<dbReference type="GO" id="GO:0005829">
    <property type="term" value="C:cytosol"/>
    <property type="evidence" value="ECO:0007005"/>
    <property type="project" value="TAIR"/>
</dbReference>
<dbReference type="GO" id="GO:0009506">
    <property type="term" value="C:plasmodesma"/>
    <property type="evidence" value="ECO:0007005"/>
    <property type="project" value="TAIR"/>
</dbReference>
<dbReference type="GO" id="GO:0005681">
    <property type="term" value="C:spliceosomal complex"/>
    <property type="evidence" value="ECO:0007669"/>
    <property type="project" value="UniProtKB-KW"/>
</dbReference>
<dbReference type="GO" id="GO:0005524">
    <property type="term" value="F:ATP binding"/>
    <property type="evidence" value="ECO:0007669"/>
    <property type="project" value="UniProtKB-KW"/>
</dbReference>
<dbReference type="GO" id="GO:0016887">
    <property type="term" value="F:ATP hydrolysis activity"/>
    <property type="evidence" value="ECO:0007669"/>
    <property type="project" value="InterPro"/>
</dbReference>
<dbReference type="GO" id="GO:0003723">
    <property type="term" value="F:RNA binding"/>
    <property type="evidence" value="ECO:0007669"/>
    <property type="project" value="UniProtKB-KW"/>
</dbReference>
<dbReference type="GO" id="GO:0003724">
    <property type="term" value="F:RNA helicase activity"/>
    <property type="evidence" value="ECO:0007669"/>
    <property type="project" value="UniProtKB-EC"/>
</dbReference>
<dbReference type="GO" id="GO:0006397">
    <property type="term" value="P:mRNA processing"/>
    <property type="evidence" value="ECO:0007669"/>
    <property type="project" value="UniProtKB-KW"/>
</dbReference>
<dbReference type="GO" id="GO:0008380">
    <property type="term" value="P:RNA splicing"/>
    <property type="evidence" value="ECO:0007669"/>
    <property type="project" value="UniProtKB-KW"/>
</dbReference>
<dbReference type="CDD" id="cd18019">
    <property type="entry name" value="DEXHc_Brr2_1"/>
    <property type="match status" value="1"/>
</dbReference>
<dbReference type="CDD" id="cd18021">
    <property type="entry name" value="DEXHc_Brr2_2"/>
    <property type="match status" value="1"/>
</dbReference>
<dbReference type="CDD" id="cd18795">
    <property type="entry name" value="SF2_C_Ski2"/>
    <property type="match status" value="2"/>
</dbReference>
<dbReference type="FunFam" id="1.10.3380.10:FF:000010">
    <property type="entry name" value="DExH-box ATP-dependent RNA helicase DExH12"/>
    <property type="match status" value="1"/>
</dbReference>
<dbReference type="FunFam" id="2.60.40.150:FF:000004">
    <property type="entry name" value="RNA helicase, activating signal cointegrator 1"/>
    <property type="match status" value="1"/>
</dbReference>
<dbReference type="FunFam" id="3.40.50.300:FF:000102">
    <property type="entry name" value="RNA helicase, activating signal cointegrator 1"/>
    <property type="match status" value="1"/>
</dbReference>
<dbReference type="FunFam" id="2.60.40.150:FF:000048">
    <property type="entry name" value="U5 small nuclear ribonucleoprotein 200 kDa helicase"/>
    <property type="match status" value="1"/>
</dbReference>
<dbReference type="FunFam" id="3.40.50.300:FF:000368">
    <property type="entry name" value="U5 small nuclear ribonucleoprotein 200 kDa helicase"/>
    <property type="match status" value="1"/>
</dbReference>
<dbReference type="FunFam" id="1.10.10.10:FF:000012">
    <property type="entry name" value="U5 small nuclear ribonucleoprotein helicase"/>
    <property type="match status" value="1"/>
</dbReference>
<dbReference type="FunFam" id="1.10.10.10:FF:000024">
    <property type="entry name" value="U5 small nuclear ribonucleoprotein helicase"/>
    <property type="match status" value="1"/>
</dbReference>
<dbReference type="FunFam" id="1.10.150.20:FF:000004">
    <property type="entry name" value="U5 small nuclear ribonucleoprotein helicase"/>
    <property type="match status" value="1"/>
</dbReference>
<dbReference type="FunFam" id="1.10.3380.10:FF:000001">
    <property type="entry name" value="U5 small nuclear ribonucleoprotein helicase"/>
    <property type="match status" value="1"/>
</dbReference>
<dbReference type="FunFam" id="3.40.50.300:FF:000062">
    <property type="entry name" value="U5 small nuclear ribonucleoprotein helicase"/>
    <property type="match status" value="1"/>
</dbReference>
<dbReference type="FunFam" id="3.40.50.300:FF:000254">
    <property type="entry name" value="U5 small nuclear ribonucleoprotein helicase"/>
    <property type="match status" value="1"/>
</dbReference>
<dbReference type="FunFam" id="1.10.150.20:FF:000013">
    <property type="entry name" value="U5 small nuclear ribonucleoprotein kDa helicase"/>
    <property type="match status" value="1"/>
</dbReference>
<dbReference type="Gene3D" id="1.10.150.20">
    <property type="entry name" value="5' to 3' exonuclease, C-terminal subdomain"/>
    <property type="match status" value="2"/>
</dbReference>
<dbReference type="Gene3D" id="2.60.40.150">
    <property type="entry name" value="C2 domain"/>
    <property type="match status" value="2"/>
</dbReference>
<dbReference type="Gene3D" id="3.40.50.300">
    <property type="entry name" value="P-loop containing nucleotide triphosphate hydrolases"/>
    <property type="match status" value="4"/>
</dbReference>
<dbReference type="Gene3D" id="1.10.3380.10">
    <property type="entry name" value="Sec63 N-terminal domain-like domain"/>
    <property type="match status" value="2"/>
</dbReference>
<dbReference type="Gene3D" id="1.10.10.10">
    <property type="entry name" value="Winged helix-like DNA-binding domain superfamily/Winged helix DNA-binding domain"/>
    <property type="match status" value="2"/>
</dbReference>
<dbReference type="InterPro" id="IPR003593">
    <property type="entry name" value="AAA+_ATPase"/>
</dbReference>
<dbReference type="InterPro" id="IPR041094">
    <property type="entry name" value="Brr2_helicase_PWI"/>
</dbReference>
<dbReference type="InterPro" id="IPR048863">
    <property type="entry name" value="BRR2_plug"/>
</dbReference>
<dbReference type="InterPro" id="IPR035892">
    <property type="entry name" value="C2_domain_sf"/>
</dbReference>
<dbReference type="InterPro" id="IPR011545">
    <property type="entry name" value="DEAD/DEAH_box_helicase_dom"/>
</dbReference>
<dbReference type="InterPro" id="IPR050474">
    <property type="entry name" value="Hel308_SKI2-like"/>
</dbReference>
<dbReference type="InterPro" id="IPR014001">
    <property type="entry name" value="Helicase_ATP-bd"/>
</dbReference>
<dbReference type="InterPro" id="IPR001650">
    <property type="entry name" value="Helicase_C-like"/>
</dbReference>
<dbReference type="InterPro" id="IPR014756">
    <property type="entry name" value="Ig_E-set"/>
</dbReference>
<dbReference type="InterPro" id="IPR027417">
    <property type="entry name" value="P-loop_NTPase"/>
</dbReference>
<dbReference type="InterPro" id="IPR004179">
    <property type="entry name" value="Sec63-dom"/>
</dbReference>
<dbReference type="InterPro" id="IPR036388">
    <property type="entry name" value="WH-like_DNA-bd_sf"/>
</dbReference>
<dbReference type="InterPro" id="IPR036390">
    <property type="entry name" value="WH_DNA-bd_sf"/>
</dbReference>
<dbReference type="PANTHER" id="PTHR47961:SF4">
    <property type="entry name" value="ACTIVATING SIGNAL COINTEGRATOR 1 COMPLEX SUBUNIT 3"/>
    <property type="match status" value="1"/>
</dbReference>
<dbReference type="PANTHER" id="PTHR47961">
    <property type="entry name" value="DNA POLYMERASE THETA, PUTATIVE (AFU_ORTHOLOGUE AFUA_1G05260)-RELATED"/>
    <property type="match status" value="1"/>
</dbReference>
<dbReference type="Pfam" id="PF21188">
    <property type="entry name" value="BRR2_plug"/>
    <property type="match status" value="1"/>
</dbReference>
<dbReference type="Pfam" id="PF00270">
    <property type="entry name" value="DEAD"/>
    <property type="match status" value="2"/>
</dbReference>
<dbReference type="Pfam" id="PF00271">
    <property type="entry name" value="Helicase_C"/>
    <property type="match status" value="1"/>
</dbReference>
<dbReference type="Pfam" id="PF18149">
    <property type="entry name" value="Helicase_PWI"/>
    <property type="match status" value="1"/>
</dbReference>
<dbReference type="Pfam" id="PF02889">
    <property type="entry name" value="Sec63"/>
    <property type="match status" value="2"/>
</dbReference>
<dbReference type="Pfam" id="PF23445">
    <property type="entry name" value="SNRNP200_wHTH"/>
    <property type="match status" value="2"/>
</dbReference>
<dbReference type="PIRSF" id="PIRSF039073">
    <property type="entry name" value="BRR2"/>
    <property type="match status" value="1"/>
</dbReference>
<dbReference type="SMART" id="SM00382">
    <property type="entry name" value="AAA"/>
    <property type="match status" value="2"/>
</dbReference>
<dbReference type="SMART" id="SM00487">
    <property type="entry name" value="DEXDc"/>
    <property type="match status" value="2"/>
</dbReference>
<dbReference type="SMART" id="SM00490">
    <property type="entry name" value="HELICc"/>
    <property type="match status" value="2"/>
</dbReference>
<dbReference type="SMART" id="SM00973">
    <property type="entry name" value="Sec63"/>
    <property type="match status" value="2"/>
</dbReference>
<dbReference type="SUPFAM" id="SSF81296">
    <property type="entry name" value="E set domains"/>
    <property type="match status" value="1"/>
</dbReference>
<dbReference type="SUPFAM" id="SSF52540">
    <property type="entry name" value="P-loop containing nucleoside triphosphate hydrolases"/>
    <property type="match status" value="4"/>
</dbReference>
<dbReference type="SUPFAM" id="SSF158702">
    <property type="entry name" value="Sec63 N-terminal domain-like"/>
    <property type="match status" value="2"/>
</dbReference>
<dbReference type="SUPFAM" id="SSF46785">
    <property type="entry name" value="Winged helix' DNA-binding domain"/>
    <property type="match status" value="2"/>
</dbReference>
<dbReference type="PROSITE" id="PS51192">
    <property type="entry name" value="HELICASE_ATP_BIND_1"/>
    <property type="match status" value="2"/>
</dbReference>
<dbReference type="PROSITE" id="PS51194">
    <property type="entry name" value="HELICASE_CTER"/>
    <property type="match status" value="2"/>
</dbReference>
<organism>
    <name type="scientific">Arabidopsis thaliana</name>
    <name type="common">Mouse-ear cress</name>
    <dbReference type="NCBI Taxonomy" id="3702"/>
    <lineage>
        <taxon>Eukaryota</taxon>
        <taxon>Viridiplantae</taxon>
        <taxon>Streptophyta</taxon>
        <taxon>Embryophyta</taxon>
        <taxon>Tracheophyta</taxon>
        <taxon>Spermatophyta</taxon>
        <taxon>Magnoliopsida</taxon>
        <taxon>eudicotyledons</taxon>
        <taxon>Gunneridae</taxon>
        <taxon>Pentapetalae</taxon>
        <taxon>rosids</taxon>
        <taxon>malvids</taxon>
        <taxon>Brassicales</taxon>
        <taxon>Brassicaceae</taxon>
        <taxon>Camelineae</taxon>
        <taxon>Arabidopsis</taxon>
    </lineage>
</organism>
<reference key="1">
    <citation type="journal article" date="1999" name="Nature">
        <title>Sequence and analysis of chromosome 2 of the plant Arabidopsis thaliana.</title>
        <authorList>
            <person name="Lin X."/>
            <person name="Kaul S."/>
            <person name="Rounsley S.D."/>
            <person name="Shea T.P."/>
            <person name="Benito M.-I."/>
            <person name="Town C.D."/>
            <person name="Fujii C.Y."/>
            <person name="Mason T.M."/>
            <person name="Bowman C.L."/>
            <person name="Barnstead M.E."/>
            <person name="Feldblyum T.V."/>
            <person name="Buell C.R."/>
            <person name="Ketchum K.A."/>
            <person name="Lee J.J."/>
            <person name="Ronning C.M."/>
            <person name="Koo H.L."/>
            <person name="Moffat K.S."/>
            <person name="Cronin L.A."/>
            <person name="Shen M."/>
            <person name="Pai G."/>
            <person name="Van Aken S."/>
            <person name="Umayam L."/>
            <person name="Tallon L.J."/>
            <person name="Gill J.E."/>
            <person name="Adams M.D."/>
            <person name="Carrera A.J."/>
            <person name="Creasy T.H."/>
            <person name="Goodman H.M."/>
            <person name="Somerville C.R."/>
            <person name="Copenhaver G.P."/>
            <person name="Preuss D."/>
            <person name="Nierman W.C."/>
            <person name="White O."/>
            <person name="Eisen J.A."/>
            <person name="Salzberg S.L."/>
            <person name="Fraser C.M."/>
            <person name="Venter J.C."/>
        </authorList>
    </citation>
    <scope>NUCLEOTIDE SEQUENCE [LARGE SCALE GENOMIC DNA]</scope>
    <source>
        <strain>cv. Columbia</strain>
    </source>
</reference>
<reference key="2">
    <citation type="journal article" date="2017" name="Plant J.">
        <title>Araport11: a complete reannotation of the Arabidopsis thaliana reference genome.</title>
        <authorList>
            <person name="Cheng C.Y."/>
            <person name="Krishnakumar V."/>
            <person name="Chan A.P."/>
            <person name="Thibaud-Nissen F."/>
            <person name="Schobel S."/>
            <person name="Town C.D."/>
        </authorList>
    </citation>
    <scope>GENOME REANNOTATION</scope>
    <source>
        <strain>cv. Columbia</strain>
    </source>
</reference>
<reference key="3">
    <citation type="journal article" date="2003" name="Science">
        <title>Empirical analysis of transcriptional activity in the Arabidopsis genome.</title>
        <authorList>
            <person name="Yamada K."/>
            <person name="Lim J."/>
            <person name="Dale J.M."/>
            <person name="Chen H."/>
            <person name="Shinn P."/>
            <person name="Palm C.J."/>
            <person name="Southwick A.M."/>
            <person name="Wu H.C."/>
            <person name="Kim C.J."/>
            <person name="Nguyen M."/>
            <person name="Pham P.K."/>
            <person name="Cheuk R.F."/>
            <person name="Karlin-Newmann G."/>
            <person name="Liu S.X."/>
            <person name="Lam B."/>
            <person name="Sakano H."/>
            <person name="Wu T."/>
            <person name="Yu G."/>
            <person name="Miranda M."/>
            <person name="Quach H.L."/>
            <person name="Tripp M."/>
            <person name="Chang C.H."/>
            <person name="Lee J.M."/>
            <person name="Toriumi M.J."/>
            <person name="Chan M.M."/>
            <person name="Tang C.C."/>
            <person name="Onodera C.S."/>
            <person name="Deng J.M."/>
            <person name="Akiyama K."/>
            <person name="Ansari Y."/>
            <person name="Arakawa T."/>
            <person name="Banh J."/>
            <person name="Banno F."/>
            <person name="Bowser L."/>
            <person name="Brooks S.Y."/>
            <person name="Carninci P."/>
            <person name="Chao Q."/>
            <person name="Choy N."/>
            <person name="Enju A."/>
            <person name="Goldsmith A.D."/>
            <person name="Gurjal M."/>
            <person name="Hansen N.F."/>
            <person name="Hayashizaki Y."/>
            <person name="Johnson-Hopson C."/>
            <person name="Hsuan V.W."/>
            <person name="Iida K."/>
            <person name="Karnes M."/>
            <person name="Khan S."/>
            <person name="Koesema E."/>
            <person name="Ishida J."/>
            <person name="Jiang P.X."/>
            <person name="Jones T."/>
            <person name="Kawai J."/>
            <person name="Kamiya A."/>
            <person name="Meyers C."/>
            <person name="Nakajima M."/>
            <person name="Narusaka M."/>
            <person name="Seki M."/>
            <person name="Sakurai T."/>
            <person name="Satou M."/>
            <person name="Tamse R."/>
            <person name="Vaysberg M."/>
            <person name="Wallender E.K."/>
            <person name="Wong C."/>
            <person name="Yamamura Y."/>
            <person name="Yuan S."/>
            <person name="Shinozaki K."/>
            <person name="Davis R.W."/>
            <person name="Theologis A."/>
            <person name="Ecker J.R."/>
        </authorList>
    </citation>
    <scope>NUCLEOTIDE SEQUENCE [LARGE SCALE MRNA] OF 1556-2172</scope>
    <source>
        <strain>cv. Columbia</strain>
    </source>
</reference>
<reference key="4">
    <citation type="journal article" date="2013" name="PLoS ONE">
        <title>Genome-wide comparative in silico analysis of the RNA helicase gene family in Zea mays and Glycine max: a comparison with Arabidopsis and Oryza sativa.</title>
        <authorList>
            <person name="Xu R."/>
            <person name="Zhang S."/>
            <person name="Huang J."/>
            <person name="Zheng C."/>
        </authorList>
    </citation>
    <scope>GENE FAMILY</scope>
</reference>
<protein>
    <recommendedName>
        <fullName evidence="6">DExH-box ATP-dependent RNA helicase DExH13</fullName>
        <ecNumber evidence="6">3.6.4.13</ecNumber>
    </recommendedName>
    <alternativeName>
        <fullName evidence="6">BRR2 homolog B</fullName>
        <shortName evidence="6">AtBRR2B</shortName>
    </alternativeName>
    <alternativeName>
        <fullName evidence="6">Pre-mRNA-splicing helicase BRR2B</fullName>
    </alternativeName>
</protein>
<sequence length="2172" mass="247389">MTNLGGGGAEEQARLKQYGYKVNSSLVLNSDERRRDTHESSGEPESLRGRIDPKSFGDRVVRGRPHELDERLNKSKKKKERCDDLVSARESKRVRLREVSVLNDTEDGVYQPKTKETRVAFEIMLGLIQQQLGGQPLDIVCGAADEILAVLKNESVKNHEKKVEIEKLLNVITDQVFSQFVSIGKLITDYEEGGDSLSGKASEDGGLDYDIGVALECEEDDDESDLDMVQDEKDEEDEDVVELNKTGVVQVGVAINGEDARQAKEDTSLNVLDIDAYWLQRKISQEYEQKIDAQECQELAEELLKILAEGNDRDVEIKLLEHLQFEKFSLVKFLLQNRLKVVWCTRLARGRDQEERNQIEEEMLGLGSELAAIVKELHAKRATAKEREEKREKDIKEEAQHLMDDDSGVDGDRGMRDVDDLDLENGWLKGQRQVMDLESLAFNQGGFTRENNKCELPDRSFRIRGKEFDEVHVPWVSKKFDSNEKLVKISDLPEWAQPAFRGMQQLNRVQSKVYGTALFKADNILLCAPTGAGKTNVAVLTILHQLGLNMNPGGTFNHGNYKIVYVAPMKALVAEVVDSLSQRLKDFGVTVKELSGDQSLTGQEIKETQIIVTTPEKWDIITRKSGDRTYTQLVRLLIIDEIHLLDDNRGPVLESIVARTLRQIESTKEHIRLVGLSATLPNCDDVASFLRVDLKNGLFIFDRSYRPVPLGQQYIGINVKKPLRRFQLMNDICYQKVVAVAGKHQVLIFVHSRKETAKTARAIRDTAMANDTLSRFLKEDSQSREILKCLAGLLKNNDLKELLPYGFAIHHAGLTRTDREIVENQFRWGNLQVLISTATLAWGVNLPAHTVIIKGTQVYNPERGEWMELSPLDVMQMIGRAGRPQYDQQGEGIIITGYSKLQYYLRLMNEQLPIESQFISKLADQLNAEIVLGTIQNAREACHWLGYTYLYVRMVRNPTLYGVSPDALAKDLLLEERRADLIHSAATILDKNNLIKYDRKSGHFQVTDLGRIASYYYISHGTIAAYNENLKPTMNDIELCRLFSLSEEFKYVTVRQDEKMELAKLLDRVPIPVKETLEDPSAKINVLLQVYISKLKLEGLSLTSDMVYITQSAGRLLRAIFEIVLKRGWAQLSQKALNLSKMVGKRMWSVQTPLWQFPGIPKEILMKLEKNDLVWERYYDLSSQELGELICNPKMGRPLHKYIHQFPKLKLAAHVQPISRSVLQVELTVTPDFHWDDKANKYVEPFWIIVEDNDGEKILHHEYFLFKKRVIDEDHTLNFTVPISEPIPPQYFIRVVSDKWLDSPTVLPVSFRHLILPEKYPPPTELLDLQPLPVMALRNPSYETLYQDFKHFNPVQTQVFTVLYNTSDNVVVAAPTGSGKTICAEFAILRNHLEGPDSAMRVVYIAPLEAIAKEQFRDWEKKFGKGLGLRVVELTGETLLDLKLLEKGQIIISTPEKWDALSRRWKQRKYIQQVSLFIVDELHLIGGQGGQVLEVIVSRMRYISSQVGNKIRIVALSTSLANAKDLGEWIGASSCGVFNFPPNVRPVPLEIHIHGVDILSFEARMQAMTKPTYTAIVQHAKNKKPAIVFVPTRKHVRLTAVDLIAYSHMDNMKSPDFLLGNLEELEPFLIQICEETLKETLRHGIGYLHEGLSNLDQEIVTQLFEAGRIQVCVMSSSLCWGTPLKAHLVVVMGTHFYDGRENSHSDYPISNLLQMMGRGSRPLLDDAGKCVIFCHAPRKEYYKKFLYEALPVESHLQHFLHDNFNAEVVARVIENKQDAVDYLTWSFMYRRLPQNPNYYNLLGVSHRHLSDHLSELVENTLSDLEVSKCIEIDNELDLSPLNLGMIASYYYINYTTIERFSSLLASKTKMKGLLEILTSASEYDLIPIRPGEEDAVRRLINHQRFSFQNPRCTDPRVKTSALLQAHFSRQKISGNLVMDQCEVLLSATRLLQAMVDVISSNGCLNLALLAMEVSQMVTQGMWDRDSMLLQLPHFTKDLAKRCHENPGNNIETIFDLVEMEDDKRQELLQMSDAQLLDIARFCNRFPNIDLTYEIVGSNEVSPGKDITLQVLLERDMEGRTEVGPVDAPRYPKTKEEGWWLVVGEAKTNQLMAIKRISLQRKAQVKLEFAVPTETGEKSYTLYFMCDSYLGCDQEYSFTVDVKDSDAADHMEE</sequence>
<keyword id="KW-0067">ATP-binding</keyword>
<keyword id="KW-0347">Helicase</keyword>
<keyword id="KW-0378">Hydrolase</keyword>
<keyword id="KW-0507">mRNA processing</keyword>
<keyword id="KW-0508">mRNA splicing</keyword>
<keyword id="KW-0547">Nucleotide-binding</keyword>
<keyword id="KW-0539">Nucleus</keyword>
<keyword id="KW-1185">Reference proteome</keyword>
<keyword id="KW-0677">Repeat</keyword>
<keyword id="KW-0694">RNA-binding</keyword>
<keyword id="KW-0747">Spliceosome</keyword>
<evidence type="ECO:0000250" key="1">
    <source>
        <dbReference type="UniProtKB" id="P32639"/>
    </source>
</evidence>
<evidence type="ECO:0000255" key="2"/>
<evidence type="ECO:0000255" key="3">
    <source>
        <dbReference type="PROSITE-ProRule" id="PRU00541"/>
    </source>
</evidence>
<evidence type="ECO:0000255" key="4">
    <source>
        <dbReference type="PROSITE-ProRule" id="PRU00542"/>
    </source>
</evidence>
<evidence type="ECO:0000256" key="5">
    <source>
        <dbReference type="SAM" id="MobiDB-lite"/>
    </source>
</evidence>
<evidence type="ECO:0000305" key="6"/>
<evidence type="ECO:0000312" key="7">
    <source>
        <dbReference type="EMBL" id="AAB88651.1"/>
    </source>
</evidence>
<comment type="function">
    <text evidence="1">RNA helicase that plays an essential role in pre-mRNA splicing as component of the U5 snRNP and U4/U6-U5 tri-snRNP complexes. Involved in spliceosome assembly, activation and disassembly.</text>
</comment>
<comment type="catalytic activity">
    <reaction evidence="6">
        <text>ATP + H2O = ADP + phosphate + H(+)</text>
        <dbReference type="Rhea" id="RHEA:13065"/>
        <dbReference type="ChEBI" id="CHEBI:15377"/>
        <dbReference type="ChEBI" id="CHEBI:15378"/>
        <dbReference type="ChEBI" id="CHEBI:30616"/>
        <dbReference type="ChEBI" id="CHEBI:43474"/>
        <dbReference type="ChEBI" id="CHEBI:456216"/>
        <dbReference type="EC" id="3.6.4.13"/>
    </reaction>
</comment>
<comment type="subcellular location">
    <subcellularLocation>
        <location evidence="6">Nucleus</location>
    </subcellularLocation>
</comment>
<name>DEXHD_ARATH</name>
<proteinExistence type="evidence at transcript level"/>
<gene>
    <name evidence="6" type="primary">BRR2B</name>
    <name type="ordered locus">At2g42270</name>
    <name evidence="7" type="ORF">T24P15.18</name>
</gene>
<feature type="chain" id="PRO_0000435300" description="DExH-box ATP-dependent RNA helicase DExH13">
    <location>
        <begin position="1"/>
        <end position="2172"/>
    </location>
</feature>
<feature type="domain" description="Helicase ATP-binding 1" evidence="3">
    <location>
        <begin position="515"/>
        <end position="698"/>
    </location>
</feature>
<feature type="domain" description="Helicase C-terminal 1" evidence="4">
    <location>
        <begin position="742"/>
        <end position="946"/>
    </location>
</feature>
<feature type="domain" description="SEC63 1" evidence="2">
    <location>
        <begin position="1007"/>
        <end position="1308"/>
    </location>
</feature>
<feature type="domain" description="Helicase ATP-binding 2" evidence="3">
    <location>
        <begin position="1361"/>
        <end position="1538"/>
    </location>
</feature>
<feature type="domain" description="Helicase C-terminal 2" evidence="4">
    <location>
        <begin position="1575"/>
        <end position="1772"/>
    </location>
</feature>
<feature type="domain" description="SEC63 2" evidence="2">
    <location>
        <begin position="1840"/>
        <end position="2157"/>
    </location>
</feature>
<feature type="region of interest" description="Disordered" evidence="5">
    <location>
        <begin position="20"/>
        <end position="83"/>
    </location>
</feature>
<feature type="short sequence motif" description="DEIH box" evidence="6">
    <location>
        <begin position="640"/>
        <end position="643"/>
    </location>
</feature>
<feature type="short sequence motif" description="DELH box" evidence="6">
    <location>
        <begin position="1480"/>
        <end position="1483"/>
    </location>
</feature>
<feature type="compositionally biased region" description="Basic and acidic residues" evidence="5">
    <location>
        <begin position="30"/>
        <end position="73"/>
    </location>
</feature>
<feature type="binding site" evidence="3">
    <location>
        <begin position="528"/>
        <end position="535"/>
    </location>
    <ligand>
        <name>ATP</name>
        <dbReference type="ChEBI" id="CHEBI:30616"/>
    </ligand>
</feature>
<feature type="binding site" evidence="3">
    <location>
        <begin position="1374"/>
        <end position="1381"/>
    </location>
    <ligand>
        <name>ATP</name>
        <dbReference type="ChEBI" id="CHEBI:30616"/>
    </ligand>
</feature>